<accession>B3PMI7</accession>
<sequence>MVSKQKIEELVKKFGRNAKDTGHLPVQIAILTEKIESLKKHFEANKKDLHSMRGFIAKVNHRKALLSHLKSSNYELYLETIKALNIRK</sequence>
<evidence type="ECO:0000255" key="1">
    <source>
        <dbReference type="HAMAP-Rule" id="MF_01343"/>
    </source>
</evidence>
<evidence type="ECO:0000305" key="2"/>
<keyword id="KW-1185">Reference proteome</keyword>
<keyword id="KW-0687">Ribonucleoprotein</keyword>
<keyword id="KW-0689">Ribosomal protein</keyword>
<keyword id="KW-0694">RNA-binding</keyword>
<keyword id="KW-0699">rRNA-binding</keyword>
<organism>
    <name type="scientific">Metamycoplasma arthritidis (strain 158L3-1)</name>
    <name type="common">Mycoplasma arthritidis</name>
    <dbReference type="NCBI Taxonomy" id="243272"/>
    <lineage>
        <taxon>Bacteria</taxon>
        <taxon>Bacillati</taxon>
        <taxon>Mycoplasmatota</taxon>
        <taxon>Mycoplasmoidales</taxon>
        <taxon>Metamycoplasmataceae</taxon>
        <taxon>Metamycoplasma</taxon>
    </lineage>
</organism>
<gene>
    <name evidence="1" type="primary">rpsO</name>
    <name type="ordered locus">MARTH_orf369</name>
</gene>
<dbReference type="EMBL" id="CP001047">
    <property type="protein sequence ID" value="ACF07239.1"/>
    <property type="molecule type" value="Genomic_DNA"/>
</dbReference>
<dbReference type="RefSeq" id="WP_012498196.1">
    <property type="nucleotide sequence ID" value="NC_011025.1"/>
</dbReference>
<dbReference type="SMR" id="B3PMI7"/>
<dbReference type="STRING" id="243272.MARTH_orf369"/>
<dbReference type="KEGG" id="mat:MARTH_orf369"/>
<dbReference type="eggNOG" id="COG0184">
    <property type="taxonomic scope" value="Bacteria"/>
</dbReference>
<dbReference type="HOGENOM" id="CLU_148518_1_0_14"/>
<dbReference type="Proteomes" id="UP000008812">
    <property type="component" value="Chromosome"/>
</dbReference>
<dbReference type="GO" id="GO:0022627">
    <property type="term" value="C:cytosolic small ribosomal subunit"/>
    <property type="evidence" value="ECO:0007669"/>
    <property type="project" value="TreeGrafter"/>
</dbReference>
<dbReference type="GO" id="GO:0019843">
    <property type="term" value="F:rRNA binding"/>
    <property type="evidence" value="ECO:0007669"/>
    <property type="project" value="UniProtKB-UniRule"/>
</dbReference>
<dbReference type="GO" id="GO:0003735">
    <property type="term" value="F:structural constituent of ribosome"/>
    <property type="evidence" value="ECO:0007669"/>
    <property type="project" value="InterPro"/>
</dbReference>
<dbReference type="GO" id="GO:0006412">
    <property type="term" value="P:translation"/>
    <property type="evidence" value="ECO:0007669"/>
    <property type="project" value="UniProtKB-UniRule"/>
</dbReference>
<dbReference type="CDD" id="cd00353">
    <property type="entry name" value="Ribosomal_S15p_S13e"/>
    <property type="match status" value="1"/>
</dbReference>
<dbReference type="Gene3D" id="1.10.287.10">
    <property type="entry name" value="S15/NS1, RNA-binding"/>
    <property type="match status" value="1"/>
</dbReference>
<dbReference type="HAMAP" id="MF_01343_B">
    <property type="entry name" value="Ribosomal_uS15_B"/>
    <property type="match status" value="1"/>
</dbReference>
<dbReference type="InterPro" id="IPR000589">
    <property type="entry name" value="Ribosomal_uS15"/>
</dbReference>
<dbReference type="InterPro" id="IPR005290">
    <property type="entry name" value="Ribosomal_uS15_bac-type"/>
</dbReference>
<dbReference type="InterPro" id="IPR009068">
    <property type="entry name" value="uS15_NS1_RNA-bd_sf"/>
</dbReference>
<dbReference type="NCBIfam" id="TIGR00952">
    <property type="entry name" value="S15_bact"/>
    <property type="match status" value="1"/>
</dbReference>
<dbReference type="PANTHER" id="PTHR23321">
    <property type="entry name" value="RIBOSOMAL PROTEIN S15, BACTERIAL AND ORGANELLAR"/>
    <property type="match status" value="1"/>
</dbReference>
<dbReference type="PANTHER" id="PTHR23321:SF26">
    <property type="entry name" value="SMALL RIBOSOMAL SUBUNIT PROTEIN US15M"/>
    <property type="match status" value="1"/>
</dbReference>
<dbReference type="Pfam" id="PF00312">
    <property type="entry name" value="Ribosomal_S15"/>
    <property type="match status" value="1"/>
</dbReference>
<dbReference type="SMART" id="SM01387">
    <property type="entry name" value="Ribosomal_S15"/>
    <property type="match status" value="1"/>
</dbReference>
<dbReference type="SUPFAM" id="SSF47060">
    <property type="entry name" value="S15/NS1 RNA-binding domain"/>
    <property type="match status" value="1"/>
</dbReference>
<comment type="function">
    <text evidence="1">One of the primary rRNA binding proteins, it binds directly to 16S rRNA where it helps nucleate assembly of the platform of the 30S subunit by binding and bridging several RNA helices of the 16S rRNA.</text>
</comment>
<comment type="function">
    <text evidence="1">Forms an intersubunit bridge (bridge B4) with the 23S rRNA of the 50S subunit in the ribosome.</text>
</comment>
<comment type="subunit">
    <text evidence="1">Part of the 30S ribosomal subunit. Forms a bridge to the 50S subunit in the 70S ribosome, contacting the 23S rRNA.</text>
</comment>
<comment type="similarity">
    <text evidence="1">Belongs to the universal ribosomal protein uS15 family.</text>
</comment>
<protein>
    <recommendedName>
        <fullName evidence="1">Small ribosomal subunit protein uS15</fullName>
    </recommendedName>
    <alternativeName>
        <fullName evidence="2">30S ribosomal protein S15</fullName>
    </alternativeName>
</protein>
<proteinExistence type="inferred from homology"/>
<name>RS15_META1</name>
<feature type="chain" id="PRO_0000354206" description="Small ribosomal subunit protein uS15">
    <location>
        <begin position="1"/>
        <end position="88"/>
    </location>
</feature>
<reference key="1">
    <citation type="journal article" date="2008" name="Infect. Immun.">
        <title>Genome of Mycoplasma arthritidis.</title>
        <authorList>
            <person name="Dybvig K."/>
            <person name="Zuhua C."/>
            <person name="Lao P."/>
            <person name="Jordan D.S."/>
            <person name="French C.T."/>
            <person name="Tu A.H."/>
            <person name="Loraine A.E."/>
        </authorList>
    </citation>
    <scope>NUCLEOTIDE SEQUENCE [LARGE SCALE GENOMIC DNA]</scope>
    <source>
        <strain>158L3-1</strain>
    </source>
</reference>